<name>DXS_MYCLE</name>
<comment type="function">
    <text evidence="1">Catalyzes the acyloin condensation reaction between C atoms 2 and 3 of pyruvate and glyceraldehyde 3-phosphate to yield 1-deoxy-D-xylulose-5-phosphate (DXP).</text>
</comment>
<comment type="catalytic activity">
    <reaction evidence="1">
        <text>D-glyceraldehyde 3-phosphate + pyruvate + H(+) = 1-deoxy-D-xylulose 5-phosphate + CO2</text>
        <dbReference type="Rhea" id="RHEA:12605"/>
        <dbReference type="ChEBI" id="CHEBI:15361"/>
        <dbReference type="ChEBI" id="CHEBI:15378"/>
        <dbReference type="ChEBI" id="CHEBI:16526"/>
        <dbReference type="ChEBI" id="CHEBI:57792"/>
        <dbReference type="ChEBI" id="CHEBI:59776"/>
        <dbReference type="EC" id="2.2.1.7"/>
    </reaction>
</comment>
<comment type="cofactor">
    <cofactor evidence="1">
        <name>Mg(2+)</name>
        <dbReference type="ChEBI" id="CHEBI:18420"/>
    </cofactor>
    <text evidence="1">Binds 1 Mg(2+) ion per subunit.</text>
</comment>
<comment type="cofactor">
    <cofactor evidence="1">
        <name>thiamine diphosphate</name>
        <dbReference type="ChEBI" id="CHEBI:58937"/>
    </cofactor>
    <text evidence="1">Binds 1 thiamine pyrophosphate per subunit.</text>
</comment>
<comment type="pathway">
    <text evidence="1">Metabolic intermediate biosynthesis; 1-deoxy-D-xylulose 5-phosphate biosynthesis; 1-deoxy-D-xylulose 5-phosphate from D-glyceraldehyde 3-phosphate and pyruvate: step 1/1.</text>
</comment>
<comment type="subunit">
    <text evidence="1">Homodimer.</text>
</comment>
<comment type="similarity">
    <text evidence="1">Belongs to the transketolase family. DXPS subfamily.</text>
</comment>
<comment type="sequence caution" evidence="2">
    <conflict type="erroneous initiation">
        <sequence resource="EMBL-CDS" id="AAA62954"/>
    </conflict>
</comment>
<dbReference type="EC" id="2.2.1.7" evidence="1"/>
<dbReference type="EMBL" id="U15181">
    <property type="protein sequence ID" value="AAA62954.1"/>
    <property type="status" value="ALT_INIT"/>
    <property type="molecule type" value="Genomic_DNA"/>
</dbReference>
<dbReference type="EMBL" id="AL583920">
    <property type="protein sequence ID" value="CAC31419.1"/>
    <property type="molecule type" value="Genomic_DNA"/>
</dbReference>
<dbReference type="PIR" id="H87038">
    <property type="entry name" value="H87038"/>
</dbReference>
<dbReference type="RefSeq" id="NP_301766.1">
    <property type="nucleotide sequence ID" value="NC_002677.1"/>
</dbReference>
<dbReference type="RefSeq" id="WP_010908090.1">
    <property type="nucleotide sequence ID" value="NC_002677.1"/>
</dbReference>
<dbReference type="SMR" id="Q50000"/>
<dbReference type="STRING" id="272631.gene:17574864"/>
<dbReference type="KEGG" id="mle:ML1038"/>
<dbReference type="PATRIC" id="fig|272631.5.peg.1869"/>
<dbReference type="Leproma" id="ML1038"/>
<dbReference type="eggNOG" id="COG1154">
    <property type="taxonomic scope" value="Bacteria"/>
</dbReference>
<dbReference type="HOGENOM" id="CLU_009227_1_4_11"/>
<dbReference type="OrthoDB" id="9803371at2"/>
<dbReference type="UniPathway" id="UPA00064">
    <property type="reaction ID" value="UER00091"/>
</dbReference>
<dbReference type="Proteomes" id="UP000000806">
    <property type="component" value="Chromosome"/>
</dbReference>
<dbReference type="GO" id="GO:0005829">
    <property type="term" value="C:cytosol"/>
    <property type="evidence" value="ECO:0007669"/>
    <property type="project" value="TreeGrafter"/>
</dbReference>
<dbReference type="GO" id="GO:0008661">
    <property type="term" value="F:1-deoxy-D-xylulose-5-phosphate synthase activity"/>
    <property type="evidence" value="ECO:0007669"/>
    <property type="project" value="UniProtKB-UniRule"/>
</dbReference>
<dbReference type="GO" id="GO:0000287">
    <property type="term" value="F:magnesium ion binding"/>
    <property type="evidence" value="ECO:0007669"/>
    <property type="project" value="UniProtKB-UniRule"/>
</dbReference>
<dbReference type="GO" id="GO:0030976">
    <property type="term" value="F:thiamine pyrophosphate binding"/>
    <property type="evidence" value="ECO:0007669"/>
    <property type="project" value="UniProtKB-UniRule"/>
</dbReference>
<dbReference type="GO" id="GO:0052865">
    <property type="term" value="P:1-deoxy-D-xylulose 5-phosphate biosynthetic process"/>
    <property type="evidence" value="ECO:0007669"/>
    <property type="project" value="UniProtKB-UniPathway"/>
</dbReference>
<dbReference type="GO" id="GO:0019288">
    <property type="term" value="P:isopentenyl diphosphate biosynthetic process, methylerythritol 4-phosphate pathway"/>
    <property type="evidence" value="ECO:0007669"/>
    <property type="project" value="TreeGrafter"/>
</dbReference>
<dbReference type="GO" id="GO:0016114">
    <property type="term" value="P:terpenoid biosynthetic process"/>
    <property type="evidence" value="ECO:0007669"/>
    <property type="project" value="UniProtKB-UniRule"/>
</dbReference>
<dbReference type="GO" id="GO:0009228">
    <property type="term" value="P:thiamine biosynthetic process"/>
    <property type="evidence" value="ECO:0007669"/>
    <property type="project" value="UniProtKB-UniRule"/>
</dbReference>
<dbReference type="CDD" id="cd02007">
    <property type="entry name" value="TPP_DXS"/>
    <property type="match status" value="1"/>
</dbReference>
<dbReference type="CDD" id="cd07033">
    <property type="entry name" value="TPP_PYR_DXS_TK_like"/>
    <property type="match status" value="1"/>
</dbReference>
<dbReference type="FunFam" id="3.40.50.920:FF:000002">
    <property type="entry name" value="1-deoxy-D-xylulose-5-phosphate synthase"/>
    <property type="match status" value="1"/>
</dbReference>
<dbReference type="FunFam" id="3.40.50.970:FF:000005">
    <property type="entry name" value="1-deoxy-D-xylulose-5-phosphate synthase"/>
    <property type="match status" value="1"/>
</dbReference>
<dbReference type="Gene3D" id="3.40.50.920">
    <property type="match status" value="1"/>
</dbReference>
<dbReference type="Gene3D" id="3.40.50.970">
    <property type="match status" value="2"/>
</dbReference>
<dbReference type="HAMAP" id="MF_00315">
    <property type="entry name" value="DXP_synth"/>
    <property type="match status" value="1"/>
</dbReference>
<dbReference type="InterPro" id="IPR005477">
    <property type="entry name" value="Dxylulose-5-P_synthase"/>
</dbReference>
<dbReference type="InterPro" id="IPR029061">
    <property type="entry name" value="THDP-binding"/>
</dbReference>
<dbReference type="InterPro" id="IPR009014">
    <property type="entry name" value="Transketo_C/PFOR_II"/>
</dbReference>
<dbReference type="InterPro" id="IPR005475">
    <property type="entry name" value="Transketolase-like_Pyr-bd"/>
</dbReference>
<dbReference type="InterPro" id="IPR020826">
    <property type="entry name" value="Transketolase_BS"/>
</dbReference>
<dbReference type="InterPro" id="IPR033248">
    <property type="entry name" value="Transketolase_C"/>
</dbReference>
<dbReference type="InterPro" id="IPR049557">
    <property type="entry name" value="Transketolase_CS"/>
</dbReference>
<dbReference type="NCBIfam" id="TIGR00204">
    <property type="entry name" value="dxs"/>
    <property type="match status" value="1"/>
</dbReference>
<dbReference type="NCBIfam" id="NF003933">
    <property type="entry name" value="PRK05444.2-2"/>
    <property type="match status" value="1"/>
</dbReference>
<dbReference type="PANTHER" id="PTHR43322">
    <property type="entry name" value="1-D-DEOXYXYLULOSE 5-PHOSPHATE SYNTHASE-RELATED"/>
    <property type="match status" value="1"/>
</dbReference>
<dbReference type="PANTHER" id="PTHR43322:SF5">
    <property type="entry name" value="1-DEOXY-D-XYLULOSE-5-PHOSPHATE SYNTHASE, CHLOROPLASTIC"/>
    <property type="match status" value="1"/>
</dbReference>
<dbReference type="Pfam" id="PF13292">
    <property type="entry name" value="DXP_synthase_N"/>
    <property type="match status" value="1"/>
</dbReference>
<dbReference type="Pfam" id="PF02779">
    <property type="entry name" value="Transket_pyr"/>
    <property type="match status" value="1"/>
</dbReference>
<dbReference type="Pfam" id="PF02780">
    <property type="entry name" value="Transketolase_C"/>
    <property type="match status" value="1"/>
</dbReference>
<dbReference type="SMART" id="SM00861">
    <property type="entry name" value="Transket_pyr"/>
    <property type="match status" value="1"/>
</dbReference>
<dbReference type="SUPFAM" id="SSF52518">
    <property type="entry name" value="Thiamin diphosphate-binding fold (THDP-binding)"/>
    <property type="match status" value="2"/>
</dbReference>
<dbReference type="SUPFAM" id="SSF52922">
    <property type="entry name" value="TK C-terminal domain-like"/>
    <property type="match status" value="1"/>
</dbReference>
<dbReference type="PROSITE" id="PS00801">
    <property type="entry name" value="TRANSKETOLASE_1"/>
    <property type="match status" value="1"/>
</dbReference>
<dbReference type="PROSITE" id="PS00802">
    <property type="entry name" value="TRANSKETOLASE_2"/>
    <property type="match status" value="1"/>
</dbReference>
<proteinExistence type="inferred from homology"/>
<protein>
    <recommendedName>
        <fullName evidence="1">1-deoxy-D-xylulose-5-phosphate synthase</fullName>
        <ecNumber evidence="1">2.2.1.7</ecNumber>
    </recommendedName>
    <alternativeName>
        <fullName evidence="1">1-deoxyxylulose-5-phosphate synthase</fullName>
        <shortName evidence="1">DXP synthase</shortName>
        <shortName evidence="1">DXPS</shortName>
    </alternativeName>
</protein>
<accession>Q50000</accession>
<keyword id="KW-0414">Isoprene biosynthesis</keyword>
<keyword id="KW-0460">Magnesium</keyword>
<keyword id="KW-0479">Metal-binding</keyword>
<keyword id="KW-1185">Reference proteome</keyword>
<keyword id="KW-0784">Thiamine biosynthesis</keyword>
<keyword id="KW-0786">Thiamine pyrophosphate</keyword>
<keyword id="KW-0808">Transferase</keyword>
<organism>
    <name type="scientific">Mycobacterium leprae (strain TN)</name>
    <dbReference type="NCBI Taxonomy" id="272631"/>
    <lineage>
        <taxon>Bacteria</taxon>
        <taxon>Bacillati</taxon>
        <taxon>Actinomycetota</taxon>
        <taxon>Actinomycetes</taxon>
        <taxon>Mycobacteriales</taxon>
        <taxon>Mycobacteriaceae</taxon>
        <taxon>Mycobacterium</taxon>
    </lineage>
</organism>
<evidence type="ECO:0000255" key="1">
    <source>
        <dbReference type="HAMAP-Rule" id="MF_00315"/>
    </source>
</evidence>
<evidence type="ECO:0000305" key="2"/>
<feature type="chain" id="PRO_0000189129" description="1-deoxy-D-xylulose-5-phosphate synthase">
    <location>
        <begin position="1"/>
        <end position="643"/>
    </location>
</feature>
<feature type="binding site" evidence="1">
    <location>
        <position position="71"/>
    </location>
    <ligand>
        <name>thiamine diphosphate</name>
        <dbReference type="ChEBI" id="CHEBI:58937"/>
    </ligand>
</feature>
<feature type="binding site" evidence="1">
    <location>
        <begin position="112"/>
        <end position="114"/>
    </location>
    <ligand>
        <name>thiamine diphosphate</name>
        <dbReference type="ChEBI" id="CHEBI:58937"/>
    </ligand>
</feature>
<feature type="binding site" evidence="1">
    <location>
        <position position="144"/>
    </location>
    <ligand>
        <name>Mg(2+)</name>
        <dbReference type="ChEBI" id="CHEBI:18420"/>
    </ligand>
</feature>
<feature type="binding site" evidence="1">
    <location>
        <begin position="145"/>
        <end position="146"/>
    </location>
    <ligand>
        <name>thiamine diphosphate</name>
        <dbReference type="ChEBI" id="CHEBI:58937"/>
    </ligand>
</feature>
<feature type="binding site" evidence="1">
    <location>
        <position position="173"/>
    </location>
    <ligand>
        <name>Mg(2+)</name>
        <dbReference type="ChEBI" id="CHEBI:18420"/>
    </ligand>
</feature>
<feature type="binding site" evidence="1">
    <location>
        <position position="173"/>
    </location>
    <ligand>
        <name>thiamine diphosphate</name>
        <dbReference type="ChEBI" id="CHEBI:58937"/>
    </ligand>
</feature>
<feature type="binding site" evidence="1">
    <location>
        <position position="284"/>
    </location>
    <ligand>
        <name>thiamine diphosphate</name>
        <dbReference type="ChEBI" id="CHEBI:58937"/>
    </ligand>
</feature>
<feature type="binding site" evidence="1">
    <location>
        <position position="365"/>
    </location>
    <ligand>
        <name>thiamine diphosphate</name>
        <dbReference type="ChEBI" id="CHEBI:58937"/>
    </ligand>
</feature>
<sequence length="643" mass="68863">MLEQIRRPADLQHLSQQQLRDLAAEIRELLVHKVAATGGHLGPNLGVVELTLALHRVFDSPHDPIIFDTGHQAYVHKMLTGRCQDFDSLRKKAGLSGYPSRAESEHDWVESSHASTALSYADGLAKAFELAGNRNRHVVAVVGDGALTGGMCWEALNNIAATPRPVVIVVNDNGRSYAPTIGGVADHLATLRLQPAYERLLEKGRDALHSLPLIGQIAYRFMHSVKAGIKDSLSPQLLFTDLGLKYVGPVDGHDEHAVEVALRKARGFGGPVIVHVVTRKGMGYPPAEADQAEQMHTCGVMDPTTGQPTKIAAPDWTAIFSDALIGYAMKRRDIVAITAAMPGPTGLTAFGQCFPDRLFDVGIAEQHAMTSAAGLAMGRMHPVVAIYSTFLNRAFDQIMMDVALHKLPVTMVIDRAGITGSDGPSHNGMWDLSMLGIVPGMRVAAPRDAIRLREELGEALDVDDGPTAIRFPKGDVCEDIPALKRRSGVDVLAVPATGLAQDVLLVGVGVFASMALAVAKRLHNQGIGVTVIDPRWVLPVCDGVLELAHTHKLIVTLEDNGVNGGVGAAVSTALRQVEIDTPCRDVGLPQEFYDHASRSEVLADLGLTDQDVARRITGWVVAFGHCGSGDDAGQYGPRSSQTM</sequence>
<gene>
    <name evidence="1" type="primary">dxs</name>
    <name type="synonym">tktB</name>
    <name type="ordered locus">ML1038</name>
</gene>
<reference key="1">
    <citation type="submission" date="1994-09" db="EMBL/GenBank/DDBJ databases">
        <authorList>
            <person name="Smith D.R."/>
            <person name="Robison K."/>
        </authorList>
    </citation>
    <scope>NUCLEOTIDE SEQUENCE [GENOMIC DNA]</scope>
</reference>
<reference key="2">
    <citation type="journal article" date="2001" name="Nature">
        <title>Massive gene decay in the leprosy bacillus.</title>
        <authorList>
            <person name="Cole S.T."/>
            <person name="Eiglmeier K."/>
            <person name="Parkhill J."/>
            <person name="James K.D."/>
            <person name="Thomson N.R."/>
            <person name="Wheeler P.R."/>
            <person name="Honore N."/>
            <person name="Garnier T."/>
            <person name="Churcher C.M."/>
            <person name="Harris D.E."/>
            <person name="Mungall K.L."/>
            <person name="Basham D."/>
            <person name="Brown D."/>
            <person name="Chillingworth T."/>
            <person name="Connor R."/>
            <person name="Davies R.M."/>
            <person name="Devlin K."/>
            <person name="Duthoy S."/>
            <person name="Feltwell T."/>
            <person name="Fraser A."/>
            <person name="Hamlin N."/>
            <person name="Holroyd S."/>
            <person name="Hornsby T."/>
            <person name="Jagels K."/>
            <person name="Lacroix C."/>
            <person name="Maclean J."/>
            <person name="Moule S."/>
            <person name="Murphy L.D."/>
            <person name="Oliver K."/>
            <person name="Quail M.A."/>
            <person name="Rajandream M.A."/>
            <person name="Rutherford K.M."/>
            <person name="Rutter S."/>
            <person name="Seeger K."/>
            <person name="Simon S."/>
            <person name="Simmonds M."/>
            <person name="Skelton J."/>
            <person name="Squares R."/>
            <person name="Squares S."/>
            <person name="Stevens K."/>
            <person name="Taylor K."/>
            <person name="Whitehead S."/>
            <person name="Woodward J.R."/>
            <person name="Barrell B.G."/>
        </authorList>
    </citation>
    <scope>NUCLEOTIDE SEQUENCE [LARGE SCALE GENOMIC DNA]</scope>
    <source>
        <strain>TN</strain>
    </source>
</reference>